<evidence type="ECO:0000255" key="1">
    <source>
        <dbReference type="HAMAP-Rule" id="MF_01247"/>
    </source>
</evidence>
<feature type="chain" id="PRO_1000085785" description="HTH-type transcriptional regulator MalT">
    <location>
        <begin position="1"/>
        <end position="903"/>
    </location>
</feature>
<feature type="domain" description="HTH luxR-type" evidence="1">
    <location>
        <begin position="832"/>
        <end position="897"/>
    </location>
</feature>
<feature type="DNA-binding region" description="H-T-H motif" evidence="1">
    <location>
        <begin position="856"/>
        <end position="875"/>
    </location>
</feature>
<feature type="binding site" evidence="1">
    <location>
        <begin position="39"/>
        <end position="46"/>
    </location>
    <ligand>
        <name>ATP</name>
        <dbReference type="ChEBI" id="CHEBI:30616"/>
    </ligand>
</feature>
<reference key="1">
    <citation type="journal article" date="2006" name="J. Bacteriol.">
        <title>Complete genome sequence of Yersinia pestis strains Antiqua and Nepal516: evidence of gene reduction in an emerging pathogen.</title>
        <authorList>
            <person name="Chain P.S.G."/>
            <person name="Hu P."/>
            <person name="Malfatti S.A."/>
            <person name="Radnedge L."/>
            <person name="Larimer F."/>
            <person name="Vergez L.M."/>
            <person name="Worsham P."/>
            <person name="Chu M.C."/>
            <person name="Andersen G.L."/>
        </authorList>
    </citation>
    <scope>NUCLEOTIDE SEQUENCE [LARGE SCALE GENOMIC DNA]</scope>
    <source>
        <strain>Antiqua</strain>
    </source>
</reference>
<organism>
    <name type="scientific">Yersinia pestis bv. Antiqua (strain Antiqua)</name>
    <dbReference type="NCBI Taxonomy" id="360102"/>
    <lineage>
        <taxon>Bacteria</taxon>
        <taxon>Pseudomonadati</taxon>
        <taxon>Pseudomonadota</taxon>
        <taxon>Gammaproteobacteria</taxon>
        <taxon>Enterobacterales</taxon>
        <taxon>Yersiniaceae</taxon>
        <taxon>Yersinia</taxon>
    </lineage>
</organism>
<name>MALT_YERPA</name>
<protein>
    <recommendedName>
        <fullName evidence="1">HTH-type transcriptional regulator MalT</fullName>
    </recommendedName>
    <alternativeName>
        <fullName evidence="1">ATP-dependent transcriptional activator MalT</fullName>
    </alternativeName>
</protein>
<proteinExistence type="inferred from homology"/>
<dbReference type="EMBL" id="CP000308">
    <property type="protein sequence ID" value="ABG15308.1"/>
    <property type="molecule type" value="Genomic_DNA"/>
</dbReference>
<dbReference type="RefSeq" id="WP_002208926.1">
    <property type="nucleotide sequence ID" value="NZ_CP009906.1"/>
</dbReference>
<dbReference type="SMR" id="Q1C2L4"/>
<dbReference type="GeneID" id="57974475"/>
<dbReference type="KEGG" id="ypa:YPA_3346"/>
<dbReference type="Proteomes" id="UP000001971">
    <property type="component" value="Chromosome"/>
</dbReference>
<dbReference type="GO" id="GO:0005524">
    <property type="term" value="F:ATP binding"/>
    <property type="evidence" value="ECO:0007669"/>
    <property type="project" value="UniProtKB-UniRule"/>
</dbReference>
<dbReference type="GO" id="GO:0003677">
    <property type="term" value="F:DNA binding"/>
    <property type="evidence" value="ECO:0007669"/>
    <property type="project" value="UniProtKB-KW"/>
</dbReference>
<dbReference type="GO" id="GO:0003700">
    <property type="term" value="F:DNA-binding transcription factor activity"/>
    <property type="evidence" value="ECO:0007669"/>
    <property type="project" value="UniProtKB-UniRule"/>
</dbReference>
<dbReference type="GO" id="GO:0045913">
    <property type="term" value="P:positive regulation of carbohydrate metabolic process"/>
    <property type="evidence" value="ECO:0007669"/>
    <property type="project" value="UniProtKB-UniRule"/>
</dbReference>
<dbReference type="GO" id="GO:0045893">
    <property type="term" value="P:positive regulation of DNA-templated transcription"/>
    <property type="evidence" value="ECO:0007669"/>
    <property type="project" value="UniProtKB-UniRule"/>
</dbReference>
<dbReference type="CDD" id="cd06170">
    <property type="entry name" value="LuxR_C_like"/>
    <property type="match status" value="1"/>
</dbReference>
<dbReference type="FunFam" id="1.10.10.10:FF:000115">
    <property type="entry name" value="HTH-type transcriptional regulator MalT"/>
    <property type="match status" value="1"/>
</dbReference>
<dbReference type="Gene3D" id="1.25.40.10">
    <property type="entry name" value="Tetratricopeptide repeat domain"/>
    <property type="match status" value="1"/>
</dbReference>
<dbReference type="Gene3D" id="1.10.10.10">
    <property type="entry name" value="Winged helix-like DNA-binding domain superfamily/Winged helix DNA-binding domain"/>
    <property type="match status" value="1"/>
</dbReference>
<dbReference type="HAMAP" id="MF_01247">
    <property type="entry name" value="HTH_type_MalT"/>
    <property type="match status" value="1"/>
</dbReference>
<dbReference type="InterPro" id="IPR027417">
    <property type="entry name" value="P-loop_NTPase"/>
</dbReference>
<dbReference type="InterPro" id="IPR016032">
    <property type="entry name" value="Sig_transdc_resp-reg_C-effctor"/>
</dbReference>
<dbReference type="InterPro" id="IPR011990">
    <property type="entry name" value="TPR-like_helical_dom_sf"/>
</dbReference>
<dbReference type="InterPro" id="IPR041617">
    <property type="entry name" value="TPR_MalT"/>
</dbReference>
<dbReference type="InterPro" id="IPR023768">
    <property type="entry name" value="Tscrpt_reg_HTH_MalT"/>
</dbReference>
<dbReference type="InterPro" id="IPR000792">
    <property type="entry name" value="Tscrpt_reg_LuxR_C"/>
</dbReference>
<dbReference type="InterPro" id="IPR036388">
    <property type="entry name" value="WH-like_DNA-bd_sf"/>
</dbReference>
<dbReference type="NCBIfam" id="NF003420">
    <property type="entry name" value="PRK04841.1"/>
    <property type="match status" value="1"/>
</dbReference>
<dbReference type="PANTHER" id="PTHR44688">
    <property type="entry name" value="DNA-BINDING TRANSCRIPTIONAL ACTIVATOR DEVR_DOSR"/>
    <property type="match status" value="1"/>
</dbReference>
<dbReference type="PANTHER" id="PTHR44688:SF16">
    <property type="entry name" value="DNA-BINDING TRANSCRIPTIONAL ACTIVATOR DEVR_DOSR"/>
    <property type="match status" value="1"/>
</dbReference>
<dbReference type="Pfam" id="PF00196">
    <property type="entry name" value="GerE"/>
    <property type="match status" value="1"/>
</dbReference>
<dbReference type="Pfam" id="PF17874">
    <property type="entry name" value="TPR_MalT"/>
    <property type="match status" value="1"/>
</dbReference>
<dbReference type="PRINTS" id="PR00038">
    <property type="entry name" value="HTHLUXR"/>
</dbReference>
<dbReference type="SMART" id="SM00421">
    <property type="entry name" value="HTH_LUXR"/>
    <property type="match status" value="1"/>
</dbReference>
<dbReference type="SUPFAM" id="SSF46894">
    <property type="entry name" value="C-terminal effector domain of the bipartite response regulators"/>
    <property type="match status" value="1"/>
</dbReference>
<dbReference type="SUPFAM" id="SSF52540">
    <property type="entry name" value="P-loop containing nucleoside triphosphate hydrolases"/>
    <property type="match status" value="1"/>
</dbReference>
<dbReference type="SUPFAM" id="SSF48452">
    <property type="entry name" value="TPR-like"/>
    <property type="match status" value="1"/>
</dbReference>
<dbReference type="PROSITE" id="PS00622">
    <property type="entry name" value="HTH_LUXR_1"/>
    <property type="match status" value="1"/>
</dbReference>
<dbReference type="PROSITE" id="PS50043">
    <property type="entry name" value="HTH_LUXR_2"/>
    <property type="match status" value="1"/>
</dbReference>
<keyword id="KW-0010">Activator</keyword>
<keyword id="KW-0067">ATP-binding</keyword>
<keyword id="KW-0119">Carbohydrate metabolism</keyword>
<keyword id="KW-0238">DNA-binding</keyword>
<keyword id="KW-0547">Nucleotide-binding</keyword>
<keyword id="KW-0804">Transcription</keyword>
<keyword id="KW-0805">Transcription regulation</keyword>
<accession>Q1C2L4</accession>
<gene>
    <name evidence="1" type="primary">malT</name>
    <name type="ordered locus">YPA_3346</name>
</gene>
<comment type="function">
    <text evidence="1">Positively regulates the transcription of the maltose regulon whose gene products are responsible for uptake and catabolism of malto-oligosaccharides. Specifically binds to the promoter region of its target genes, recognizing a short DNA motif called the MalT box.</text>
</comment>
<comment type="activity regulation">
    <text evidence="1">Activated by ATP and maltotriose, which are both required for DNA binding.</text>
</comment>
<comment type="subunit">
    <text evidence="1">Monomer in solution. Oligomerizes to an active state in the presence of the positive effectors ATP and maltotriose.</text>
</comment>
<comment type="similarity">
    <text evidence="1">Belongs to the MalT family.</text>
</comment>
<sequence>MLIPSKLSRPVRLQNTVVRDRLLVKLSSAANYRLTLINCPAGYGKTTLIAQWAADQSNLGWYSLDESDNQSERFATYLIAAIQLATGGHCSKSEALSQKHQYANLSALFSQLFIELSNWDGPLYLVIDDYHLITNDAIHEAMRFFLRHQPENLTLIILSRTLPSLGIANLRVRDQLLELGMQQLAFNHHEAQQFFECRLSSPLEQGDSSRLCDEVEGWVTALQLIALSSRQPNSSAQKSAKRLAGLNASHLSDYLVDEVLDQVDSKARAFLLRCSVLRSMNDALIVRLTGEDNGQQLLEELERQGLFIHRMDDSAEWFCFHPLFATFLRQRCQWELALELPELHHAAAEGWMALGYPAEAIHHALAAGDVGMLRDILLQHAWSLFHHSELALLEQCLTALPYPLLVQNPELALLQAWLAQSQHRYSEVNTLLEQAELAMQERKIPVDEILRAEFGALRAQVAINAGKPDEAEKLATDALKYLPMAHYYSRIVATSVTGEVHHCKGELARALPMMQQTEQMARRHEAYHYALWALLQQSEILIAQGFLQAAYETQEKAFELIREQHLEQLPMHEFLLRIRSQVLWSWSRLDEAEEAARKGVEILANYQPQQQLQCLAMLAKCSLARGDLDNANVYIQRCEALQHGSQYHLDWITNADKPRVIHWQMTGDKVAAASWLRQTEKPGMADNHFLQGQWRNIARVQIILGRFDEAEVVLDELNENARRLRLTSDLNRNLLLSNTLYWQTERKGEAQKALIESLTLANRTGFISHFVIEGEAMAQQLRQLIQLNALPELEQHRAQRILKDINQHHRHKFAHFDEIFVDKLLTHPQVPELIRTSPLTQREWQVLGLIYSGYSNDQIANELDVAATTIKTHIRNLYQKLGVAHRQEAVQQAQRLLQMMGYV</sequence>